<proteinExistence type="inferred from homology"/>
<accession>Q03F09</accession>
<feature type="chain" id="PRO_0000301074" description="Peptide deformylase">
    <location>
        <begin position="1"/>
        <end position="184"/>
    </location>
</feature>
<feature type="active site" evidence="1">
    <location>
        <position position="155"/>
    </location>
</feature>
<feature type="binding site" evidence="1">
    <location>
        <position position="111"/>
    </location>
    <ligand>
        <name>Fe cation</name>
        <dbReference type="ChEBI" id="CHEBI:24875"/>
    </ligand>
</feature>
<feature type="binding site" evidence="1">
    <location>
        <position position="154"/>
    </location>
    <ligand>
        <name>Fe cation</name>
        <dbReference type="ChEBI" id="CHEBI:24875"/>
    </ligand>
</feature>
<feature type="binding site" evidence="1">
    <location>
        <position position="158"/>
    </location>
    <ligand>
        <name>Fe cation</name>
        <dbReference type="ChEBI" id="CHEBI:24875"/>
    </ligand>
</feature>
<reference key="1">
    <citation type="journal article" date="2006" name="Proc. Natl. Acad. Sci. U.S.A.">
        <title>Comparative genomics of the lactic acid bacteria.</title>
        <authorList>
            <person name="Makarova K.S."/>
            <person name="Slesarev A."/>
            <person name="Wolf Y.I."/>
            <person name="Sorokin A."/>
            <person name="Mirkin B."/>
            <person name="Koonin E.V."/>
            <person name="Pavlov A."/>
            <person name="Pavlova N."/>
            <person name="Karamychev V."/>
            <person name="Polouchine N."/>
            <person name="Shakhova V."/>
            <person name="Grigoriev I."/>
            <person name="Lou Y."/>
            <person name="Rohksar D."/>
            <person name="Lucas S."/>
            <person name="Huang K."/>
            <person name="Goodstein D.M."/>
            <person name="Hawkins T."/>
            <person name="Plengvidhya V."/>
            <person name="Welker D."/>
            <person name="Hughes J."/>
            <person name="Goh Y."/>
            <person name="Benson A."/>
            <person name="Baldwin K."/>
            <person name="Lee J.-H."/>
            <person name="Diaz-Muniz I."/>
            <person name="Dosti B."/>
            <person name="Smeianov V."/>
            <person name="Wechter W."/>
            <person name="Barabote R."/>
            <person name="Lorca G."/>
            <person name="Altermann E."/>
            <person name="Barrangou R."/>
            <person name="Ganesan B."/>
            <person name="Xie Y."/>
            <person name="Rawsthorne H."/>
            <person name="Tamir D."/>
            <person name="Parker C."/>
            <person name="Breidt F."/>
            <person name="Broadbent J.R."/>
            <person name="Hutkins R."/>
            <person name="O'Sullivan D."/>
            <person name="Steele J."/>
            <person name="Unlu G."/>
            <person name="Saier M.H. Jr."/>
            <person name="Klaenhammer T."/>
            <person name="Richardson P."/>
            <person name="Kozyavkin S."/>
            <person name="Weimer B.C."/>
            <person name="Mills D.A."/>
        </authorList>
    </citation>
    <scope>NUCLEOTIDE SEQUENCE [LARGE SCALE GENOMIC DNA]</scope>
    <source>
        <strain>ATCC 25745 / CCUG 21536 / LMG 10740 / 183-1w</strain>
    </source>
</reference>
<sequence length="184" mass="20575">MIKMNDITRDGNPVLRKRAEKLTFPLDPKYLKVADEMMEYLKNSQDPAIAEKYHLRAGVGLAAPQIGLSIQMASVLVPGPDNTIDLEETLVNPVIVSQSVQIAALEEGEGCLSVDKDVPGYVPRHDRITVRYQTLDGEEKTIKLRDYPAIVCQHEIDHLKGTLFYDHINKENPLDIEDNAILIG</sequence>
<organism>
    <name type="scientific">Pediococcus pentosaceus (strain ATCC 25745 / CCUG 21536 / LMG 10740 / 183-1w)</name>
    <dbReference type="NCBI Taxonomy" id="278197"/>
    <lineage>
        <taxon>Bacteria</taxon>
        <taxon>Bacillati</taxon>
        <taxon>Bacillota</taxon>
        <taxon>Bacilli</taxon>
        <taxon>Lactobacillales</taxon>
        <taxon>Lactobacillaceae</taxon>
        <taxon>Pediococcus</taxon>
    </lineage>
</organism>
<name>DEF_PEDPA</name>
<protein>
    <recommendedName>
        <fullName evidence="1">Peptide deformylase</fullName>
        <shortName evidence="1">PDF</shortName>
        <ecNumber evidence="1">3.5.1.88</ecNumber>
    </recommendedName>
    <alternativeName>
        <fullName evidence="1">Polypeptide deformylase</fullName>
    </alternativeName>
</protein>
<dbReference type="EC" id="3.5.1.88" evidence="1"/>
<dbReference type="EMBL" id="CP000422">
    <property type="protein sequence ID" value="ABJ68213.1"/>
    <property type="molecule type" value="Genomic_DNA"/>
</dbReference>
<dbReference type="RefSeq" id="WP_011673527.1">
    <property type="nucleotide sequence ID" value="NC_008525.1"/>
</dbReference>
<dbReference type="SMR" id="Q03F09"/>
<dbReference type="STRING" id="278197.PEPE_1159"/>
<dbReference type="GeneID" id="33062324"/>
<dbReference type="KEGG" id="ppe:PEPE_1159"/>
<dbReference type="eggNOG" id="COG0242">
    <property type="taxonomic scope" value="Bacteria"/>
</dbReference>
<dbReference type="HOGENOM" id="CLU_061901_4_0_9"/>
<dbReference type="OrthoDB" id="9784988at2"/>
<dbReference type="Proteomes" id="UP000000773">
    <property type="component" value="Chromosome"/>
</dbReference>
<dbReference type="GO" id="GO:0046872">
    <property type="term" value="F:metal ion binding"/>
    <property type="evidence" value="ECO:0007669"/>
    <property type="project" value="UniProtKB-KW"/>
</dbReference>
<dbReference type="GO" id="GO:0042586">
    <property type="term" value="F:peptide deformylase activity"/>
    <property type="evidence" value="ECO:0007669"/>
    <property type="project" value="UniProtKB-UniRule"/>
</dbReference>
<dbReference type="GO" id="GO:0043686">
    <property type="term" value="P:co-translational protein modification"/>
    <property type="evidence" value="ECO:0007669"/>
    <property type="project" value="TreeGrafter"/>
</dbReference>
<dbReference type="GO" id="GO:0006412">
    <property type="term" value="P:translation"/>
    <property type="evidence" value="ECO:0007669"/>
    <property type="project" value="UniProtKB-UniRule"/>
</dbReference>
<dbReference type="CDD" id="cd00487">
    <property type="entry name" value="Pep_deformylase"/>
    <property type="match status" value="1"/>
</dbReference>
<dbReference type="FunFam" id="3.90.45.10:FF:000002">
    <property type="entry name" value="Peptide deformylase"/>
    <property type="match status" value="1"/>
</dbReference>
<dbReference type="Gene3D" id="3.90.45.10">
    <property type="entry name" value="Peptide deformylase"/>
    <property type="match status" value="1"/>
</dbReference>
<dbReference type="HAMAP" id="MF_00163">
    <property type="entry name" value="Pep_deformylase"/>
    <property type="match status" value="1"/>
</dbReference>
<dbReference type="InterPro" id="IPR023635">
    <property type="entry name" value="Peptide_deformylase"/>
</dbReference>
<dbReference type="InterPro" id="IPR036821">
    <property type="entry name" value="Peptide_deformylase_sf"/>
</dbReference>
<dbReference type="NCBIfam" id="TIGR00079">
    <property type="entry name" value="pept_deformyl"/>
    <property type="match status" value="1"/>
</dbReference>
<dbReference type="PANTHER" id="PTHR10458">
    <property type="entry name" value="PEPTIDE DEFORMYLASE"/>
    <property type="match status" value="1"/>
</dbReference>
<dbReference type="PANTHER" id="PTHR10458:SF8">
    <property type="entry name" value="PEPTIDE DEFORMYLASE 2"/>
    <property type="match status" value="1"/>
</dbReference>
<dbReference type="Pfam" id="PF01327">
    <property type="entry name" value="Pep_deformylase"/>
    <property type="match status" value="1"/>
</dbReference>
<dbReference type="PIRSF" id="PIRSF004749">
    <property type="entry name" value="Pep_def"/>
    <property type="match status" value="1"/>
</dbReference>
<dbReference type="PRINTS" id="PR01576">
    <property type="entry name" value="PDEFORMYLASE"/>
</dbReference>
<dbReference type="SUPFAM" id="SSF56420">
    <property type="entry name" value="Peptide deformylase"/>
    <property type="match status" value="1"/>
</dbReference>
<gene>
    <name evidence="1" type="primary">def</name>
    <name type="ordered locus">PEPE_1159</name>
</gene>
<comment type="function">
    <text evidence="1">Removes the formyl group from the N-terminal Met of newly synthesized proteins. Requires at least a dipeptide for an efficient rate of reaction. N-terminal L-methionine is a prerequisite for activity but the enzyme has broad specificity at other positions.</text>
</comment>
<comment type="catalytic activity">
    <reaction evidence="1">
        <text>N-terminal N-formyl-L-methionyl-[peptide] + H2O = N-terminal L-methionyl-[peptide] + formate</text>
        <dbReference type="Rhea" id="RHEA:24420"/>
        <dbReference type="Rhea" id="RHEA-COMP:10639"/>
        <dbReference type="Rhea" id="RHEA-COMP:10640"/>
        <dbReference type="ChEBI" id="CHEBI:15377"/>
        <dbReference type="ChEBI" id="CHEBI:15740"/>
        <dbReference type="ChEBI" id="CHEBI:49298"/>
        <dbReference type="ChEBI" id="CHEBI:64731"/>
        <dbReference type="EC" id="3.5.1.88"/>
    </reaction>
</comment>
<comment type="cofactor">
    <cofactor evidence="1">
        <name>Fe(2+)</name>
        <dbReference type="ChEBI" id="CHEBI:29033"/>
    </cofactor>
    <text evidence="1">Binds 1 Fe(2+) ion.</text>
</comment>
<comment type="similarity">
    <text evidence="1">Belongs to the polypeptide deformylase family.</text>
</comment>
<evidence type="ECO:0000255" key="1">
    <source>
        <dbReference type="HAMAP-Rule" id="MF_00163"/>
    </source>
</evidence>
<keyword id="KW-0378">Hydrolase</keyword>
<keyword id="KW-0408">Iron</keyword>
<keyword id="KW-0479">Metal-binding</keyword>
<keyword id="KW-0648">Protein biosynthesis</keyword>